<protein>
    <recommendedName>
        <fullName evidence="1">Periplasmic nitrate reductase</fullName>
        <ecNumber evidence="1">1.9.6.1</ecNumber>
    </recommendedName>
</protein>
<sequence>MKMTRRAFVKANAAASAAAVAGITLPASATNLIASSDQTAIHWDKAPCRFCGTGCSVLVGTQDGRVVATQGDPEAPVNKGLNCIKGYFLSKIMYGQDRLKTPLLRMKDGQYHKDGEFTPVSWDTAFDVMAEKWKASLKTKGPTSVGMFGSGQWTVMEGYAAVKLMKAGFRSNNIDPNARHCMASAVVGFMRTFGIDEPMGCYDDFEHADAFVLWGSNMAEMHPVLWTRITDRRLSHPHVKVNVLSTYYHRSFELADHGYIFHPQSDLAIANFIANYIIQNDAVNWDFVNKHTHFKQAVTDIGYGLRDDHPLQKKAKNANSGDVSDISFEEYKKSVAPYTVEKASEISGVSPDKLITLAKQYADPNTKVMSLWTMGMNQHTRGVWMQSLVYNLHLLTGKIATPGNSPFSLTGQPSACGTAREVGTFAHRLPADMVVANPKHRAIAEKVWKLPEGTIPEKPGFHAVQQDRMLKDGVLNCYWVQCNNNMQAGPNINEERLPGYRNPENFIVVSDAYPTVTAQAADLVLPTAMWVEKEGAYGNAERRTQVWYQQVKTVGESHSDSWQVIEFSKRFKVEDVWPEELLAKAPQYRGKTLYDVLFKNGQVDKFPLSEARELNDDAHHFGFYIQKGLFEEYAEFGRGHGHDLAPYDVYHQVRGLRWPVVDGKETKWRFKEGSDPYAKAGSGWDFYGKPDGKAWIISSPYEAPPEMPNEEYDLWLCTGRVLEHWHTGTMTRRVPELYKAVPDALCFMHHEDAQARGLRRGDEVLISNSRGEVRVRVETRGRNKPPKGLVFVPFFDARILVNKLILDATDPLSKQTDFKKCPVKITKVA</sequence>
<organism>
    <name type="scientific">Vibrio cholerae serotype O1 (strain M66-2)</name>
    <dbReference type="NCBI Taxonomy" id="579112"/>
    <lineage>
        <taxon>Bacteria</taxon>
        <taxon>Pseudomonadati</taxon>
        <taxon>Pseudomonadota</taxon>
        <taxon>Gammaproteobacteria</taxon>
        <taxon>Vibrionales</taxon>
        <taxon>Vibrionaceae</taxon>
        <taxon>Vibrio</taxon>
    </lineage>
</organism>
<accession>C3LVU3</accession>
<dbReference type="EC" id="1.9.6.1" evidence="1"/>
<dbReference type="EMBL" id="CP001234">
    <property type="protein sequence ID" value="ACP07598.1"/>
    <property type="molecule type" value="Genomic_DNA"/>
</dbReference>
<dbReference type="RefSeq" id="WP_000784576.1">
    <property type="nucleotide sequence ID" value="NC_012580.1"/>
</dbReference>
<dbReference type="SMR" id="C3LVU3"/>
<dbReference type="KEGG" id="vcm:VCM66_A0636"/>
<dbReference type="HOGENOM" id="CLU_000422_13_4_6"/>
<dbReference type="Proteomes" id="UP000001217">
    <property type="component" value="Chromosome II"/>
</dbReference>
<dbReference type="GO" id="GO:0016020">
    <property type="term" value="C:membrane"/>
    <property type="evidence" value="ECO:0007669"/>
    <property type="project" value="TreeGrafter"/>
</dbReference>
<dbReference type="GO" id="GO:0009325">
    <property type="term" value="C:nitrate reductase complex"/>
    <property type="evidence" value="ECO:0007669"/>
    <property type="project" value="TreeGrafter"/>
</dbReference>
<dbReference type="GO" id="GO:0042597">
    <property type="term" value="C:periplasmic space"/>
    <property type="evidence" value="ECO:0007669"/>
    <property type="project" value="UniProtKB-SubCell"/>
</dbReference>
<dbReference type="GO" id="GO:0051539">
    <property type="term" value="F:4 iron, 4 sulfur cluster binding"/>
    <property type="evidence" value="ECO:0007669"/>
    <property type="project" value="UniProtKB-KW"/>
</dbReference>
<dbReference type="GO" id="GO:0009055">
    <property type="term" value="F:electron transfer activity"/>
    <property type="evidence" value="ECO:0007669"/>
    <property type="project" value="UniProtKB-UniRule"/>
</dbReference>
<dbReference type="GO" id="GO:0005506">
    <property type="term" value="F:iron ion binding"/>
    <property type="evidence" value="ECO:0007669"/>
    <property type="project" value="UniProtKB-UniRule"/>
</dbReference>
<dbReference type="GO" id="GO:0030151">
    <property type="term" value="F:molybdenum ion binding"/>
    <property type="evidence" value="ECO:0007669"/>
    <property type="project" value="InterPro"/>
</dbReference>
<dbReference type="GO" id="GO:0043546">
    <property type="term" value="F:molybdopterin cofactor binding"/>
    <property type="evidence" value="ECO:0007669"/>
    <property type="project" value="InterPro"/>
</dbReference>
<dbReference type="GO" id="GO:0050140">
    <property type="term" value="F:nitrate reductase (cytochrome) activity"/>
    <property type="evidence" value="ECO:0007669"/>
    <property type="project" value="UniProtKB-EC"/>
</dbReference>
<dbReference type="GO" id="GO:0045333">
    <property type="term" value="P:cellular respiration"/>
    <property type="evidence" value="ECO:0007669"/>
    <property type="project" value="UniProtKB-ARBA"/>
</dbReference>
<dbReference type="GO" id="GO:0006777">
    <property type="term" value="P:Mo-molybdopterin cofactor biosynthetic process"/>
    <property type="evidence" value="ECO:0007669"/>
    <property type="project" value="UniProtKB-UniRule"/>
</dbReference>
<dbReference type="GO" id="GO:0042128">
    <property type="term" value="P:nitrate assimilation"/>
    <property type="evidence" value="ECO:0007669"/>
    <property type="project" value="UniProtKB-UniRule"/>
</dbReference>
<dbReference type="CDD" id="cd02791">
    <property type="entry name" value="MopB_CT_Nitrate-R-NapA-like"/>
    <property type="match status" value="1"/>
</dbReference>
<dbReference type="CDD" id="cd02754">
    <property type="entry name" value="MopB_Nitrate-R-NapA-like"/>
    <property type="match status" value="1"/>
</dbReference>
<dbReference type="FunFam" id="2.40.40.20:FF:000005">
    <property type="entry name" value="Periplasmic nitrate reductase"/>
    <property type="match status" value="1"/>
</dbReference>
<dbReference type="Gene3D" id="2.40.40.20">
    <property type="match status" value="1"/>
</dbReference>
<dbReference type="Gene3D" id="3.30.200.210">
    <property type="match status" value="1"/>
</dbReference>
<dbReference type="Gene3D" id="3.40.50.740">
    <property type="match status" value="1"/>
</dbReference>
<dbReference type="Gene3D" id="3.40.228.10">
    <property type="entry name" value="Dimethylsulfoxide Reductase, domain 2"/>
    <property type="match status" value="1"/>
</dbReference>
<dbReference type="HAMAP" id="MF_01630">
    <property type="entry name" value="Nitrate_reduct_NapA"/>
    <property type="match status" value="1"/>
</dbReference>
<dbReference type="InterPro" id="IPR009010">
    <property type="entry name" value="Asp_de-COase-like_dom_sf"/>
</dbReference>
<dbReference type="InterPro" id="IPR041957">
    <property type="entry name" value="CT_Nitrate-R-NapA-like"/>
</dbReference>
<dbReference type="InterPro" id="IPR006657">
    <property type="entry name" value="MoPterin_dinucl-bd_dom"/>
</dbReference>
<dbReference type="InterPro" id="IPR006656">
    <property type="entry name" value="Mopterin_OxRdtase"/>
</dbReference>
<dbReference type="InterPro" id="IPR006963">
    <property type="entry name" value="Mopterin_OxRdtase_4Fe-4S_dom"/>
</dbReference>
<dbReference type="InterPro" id="IPR027467">
    <property type="entry name" value="MopterinOxRdtase_cofactor_BS"/>
</dbReference>
<dbReference type="InterPro" id="IPR010051">
    <property type="entry name" value="Periplasm_NO3_reductase_lsu"/>
</dbReference>
<dbReference type="InterPro" id="IPR050123">
    <property type="entry name" value="Prok_molybdopt-oxidoreductase"/>
</dbReference>
<dbReference type="InterPro" id="IPR006311">
    <property type="entry name" value="TAT_signal"/>
</dbReference>
<dbReference type="NCBIfam" id="TIGR01706">
    <property type="entry name" value="NAPA"/>
    <property type="match status" value="1"/>
</dbReference>
<dbReference type="NCBIfam" id="NF010055">
    <property type="entry name" value="PRK13532.1"/>
    <property type="match status" value="1"/>
</dbReference>
<dbReference type="PANTHER" id="PTHR43105:SF11">
    <property type="entry name" value="PERIPLASMIC NITRATE REDUCTASE"/>
    <property type="match status" value="1"/>
</dbReference>
<dbReference type="PANTHER" id="PTHR43105">
    <property type="entry name" value="RESPIRATORY NITRATE REDUCTASE"/>
    <property type="match status" value="1"/>
</dbReference>
<dbReference type="Pfam" id="PF04879">
    <property type="entry name" value="Molybdop_Fe4S4"/>
    <property type="match status" value="1"/>
</dbReference>
<dbReference type="Pfam" id="PF00384">
    <property type="entry name" value="Molybdopterin"/>
    <property type="match status" value="1"/>
</dbReference>
<dbReference type="Pfam" id="PF01568">
    <property type="entry name" value="Molydop_binding"/>
    <property type="match status" value="1"/>
</dbReference>
<dbReference type="SMART" id="SM00926">
    <property type="entry name" value="Molybdop_Fe4S4"/>
    <property type="match status" value="1"/>
</dbReference>
<dbReference type="SUPFAM" id="SSF50692">
    <property type="entry name" value="ADC-like"/>
    <property type="match status" value="1"/>
</dbReference>
<dbReference type="SUPFAM" id="SSF53706">
    <property type="entry name" value="Formate dehydrogenase/DMSO reductase, domains 1-3"/>
    <property type="match status" value="1"/>
</dbReference>
<dbReference type="PROSITE" id="PS51669">
    <property type="entry name" value="4FE4S_MOW_BIS_MGD"/>
    <property type="match status" value="1"/>
</dbReference>
<dbReference type="PROSITE" id="PS00551">
    <property type="entry name" value="MOLYBDOPTERIN_PROK_1"/>
    <property type="match status" value="1"/>
</dbReference>
<dbReference type="PROSITE" id="PS51318">
    <property type="entry name" value="TAT"/>
    <property type="match status" value="1"/>
</dbReference>
<reference key="1">
    <citation type="journal article" date="2008" name="PLoS ONE">
        <title>A recalibrated molecular clock and independent origins for the cholera pandemic clones.</title>
        <authorList>
            <person name="Feng L."/>
            <person name="Reeves P.R."/>
            <person name="Lan R."/>
            <person name="Ren Y."/>
            <person name="Gao C."/>
            <person name="Zhou Z."/>
            <person name="Ren Y."/>
            <person name="Cheng J."/>
            <person name="Wang W."/>
            <person name="Wang J."/>
            <person name="Qian W."/>
            <person name="Li D."/>
            <person name="Wang L."/>
        </authorList>
    </citation>
    <scope>NUCLEOTIDE SEQUENCE [LARGE SCALE GENOMIC DNA]</scope>
    <source>
        <strain>M66-2</strain>
    </source>
</reference>
<feature type="signal peptide" description="Tat-type signal" evidence="1">
    <location>
        <begin position="1"/>
        <end position="29"/>
    </location>
</feature>
<feature type="chain" id="PRO_1000186377" description="Periplasmic nitrate reductase" evidence="1">
    <location>
        <begin position="30"/>
        <end position="829"/>
    </location>
</feature>
<feature type="domain" description="4Fe-4S Mo/W bis-MGD-type" evidence="1">
    <location>
        <begin position="41"/>
        <end position="97"/>
    </location>
</feature>
<feature type="binding site" evidence="1">
    <location>
        <position position="48"/>
    </location>
    <ligand>
        <name>[4Fe-4S] cluster</name>
        <dbReference type="ChEBI" id="CHEBI:49883"/>
    </ligand>
</feature>
<feature type="binding site" evidence="1">
    <location>
        <position position="51"/>
    </location>
    <ligand>
        <name>[4Fe-4S] cluster</name>
        <dbReference type="ChEBI" id="CHEBI:49883"/>
    </ligand>
</feature>
<feature type="binding site" evidence="1">
    <location>
        <position position="55"/>
    </location>
    <ligand>
        <name>[4Fe-4S] cluster</name>
        <dbReference type="ChEBI" id="CHEBI:49883"/>
    </ligand>
</feature>
<feature type="binding site" evidence="1">
    <location>
        <position position="83"/>
    </location>
    <ligand>
        <name>[4Fe-4S] cluster</name>
        <dbReference type="ChEBI" id="CHEBI:49883"/>
    </ligand>
</feature>
<feature type="binding site" evidence="1">
    <location>
        <position position="85"/>
    </location>
    <ligand>
        <name>Mo-bis(molybdopterin guanine dinucleotide)</name>
        <dbReference type="ChEBI" id="CHEBI:60539"/>
    </ligand>
</feature>
<feature type="binding site" evidence="1">
    <location>
        <position position="152"/>
    </location>
    <ligand>
        <name>Mo-bis(molybdopterin guanine dinucleotide)</name>
        <dbReference type="ChEBI" id="CHEBI:60539"/>
    </ligand>
</feature>
<feature type="binding site" evidence="1">
    <location>
        <position position="177"/>
    </location>
    <ligand>
        <name>Mo-bis(molybdopterin guanine dinucleotide)</name>
        <dbReference type="ChEBI" id="CHEBI:60539"/>
    </ligand>
</feature>
<feature type="binding site" evidence="1">
    <location>
        <position position="181"/>
    </location>
    <ligand>
        <name>Mo-bis(molybdopterin guanine dinucleotide)</name>
        <dbReference type="ChEBI" id="CHEBI:60539"/>
    </ligand>
</feature>
<feature type="binding site" evidence="1">
    <location>
        <begin position="214"/>
        <end position="221"/>
    </location>
    <ligand>
        <name>Mo-bis(molybdopterin guanine dinucleotide)</name>
        <dbReference type="ChEBI" id="CHEBI:60539"/>
    </ligand>
</feature>
<feature type="binding site" evidence="1">
    <location>
        <begin position="245"/>
        <end position="249"/>
    </location>
    <ligand>
        <name>Mo-bis(molybdopterin guanine dinucleotide)</name>
        <dbReference type="ChEBI" id="CHEBI:60539"/>
    </ligand>
</feature>
<feature type="binding site" evidence="1">
    <location>
        <begin position="264"/>
        <end position="266"/>
    </location>
    <ligand>
        <name>Mo-bis(molybdopterin guanine dinucleotide)</name>
        <dbReference type="ChEBI" id="CHEBI:60539"/>
    </ligand>
</feature>
<feature type="binding site" evidence="1">
    <location>
        <position position="374"/>
    </location>
    <ligand>
        <name>Mo-bis(molybdopterin guanine dinucleotide)</name>
        <dbReference type="ChEBI" id="CHEBI:60539"/>
    </ligand>
</feature>
<feature type="binding site" evidence="1">
    <location>
        <position position="378"/>
    </location>
    <ligand>
        <name>Mo-bis(molybdopterin guanine dinucleotide)</name>
        <dbReference type="ChEBI" id="CHEBI:60539"/>
    </ligand>
</feature>
<feature type="binding site" evidence="1">
    <location>
        <position position="484"/>
    </location>
    <ligand>
        <name>Mo-bis(molybdopterin guanine dinucleotide)</name>
        <dbReference type="ChEBI" id="CHEBI:60539"/>
    </ligand>
</feature>
<feature type="binding site" evidence="1">
    <location>
        <begin position="510"/>
        <end position="511"/>
    </location>
    <ligand>
        <name>Mo-bis(molybdopterin guanine dinucleotide)</name>
        <dbReference type="ChEBI" id="CHEBI:60539"/>
    </ligand>
</feature>
<feature type="binding site" evidence="1">
    <location>
        <position position="533"/>
    </location>
    <ligand>
        <name>Mo-bis(molybdopterin guanine dinucleotide)</name>
        <dbReference type="ChEBI" id="CHEBI:60539"/>
    </ligand>
</feature>
<feature type="binding site" evidence="1">
    <location>
        <position position="560"/>
    </location>
    <ligand>
        <name>Mo-bis(molybdopterin guanine dinucleotide)</name>
        <dbReference type="ChEBI" id="CHEBI:60539"/>
    </ligand>
</feature>
<feature type="binding site" evidence="1">
    <location>
        <begin position="718"/>
        <end position="727"/>
    </location>
    <ligand>
        <name>Mo-bis(molybdopterin guanine dinucleotide)</name>
        <dbReference type="ChEBI" id="CHEBI:60539"/>
    </ligand>
</feature>
<feature type="binding site" evidence="1">
    <location>
        <position position="794"/>
    </location>
    <ligand>
        <name>substrate</name>
    </ligand>
</feature>
<feature type="binding site" evidence="1">
    <location>
        <position position="802"/>
    </location>
    <ligand>
        <name>Mo-bis(molybdopterin guanine dinucleotide)</name>
        <dbReference type="ChEBI" id="CHEBI:60539"/>
    </ligand>
</feature>
<feature type="binding site" evidence="1">
    <location>
        <position position="819"/>
    </location>
    <ligand>
        <name>Mo-bis(molybdopterin guanine dinucleotide)</name>
        <dbReference type="ChEBI" id="CHEBI:60539"/>
    </ligand>
</feature>
<gene>
    <name evidence="1" type="primary">napA</name>
    <name type="ordered locus">VCM66_A0636</name>
</gene>
<comment type="function">
    <text evidence="1">Catalytic subunit of the periplasmic nitrate reductase complex NapAB. Receives electrons from NapB and catalyzes the reduction of nitrate to nitrite.</text>
</comment>
<comment type="catalytic activity">
    <reaction evidence="1">
        <text>2 Fe(II)-[cytochrome] + nitrate + 2 H(+) = 2 Fe(III)-[cytochrome] + nitrite + H2O</text>
        <dbReference type="Rhea" id="RHEA:12909"/>
        <dbReference type="Rhea" id="RHEA-COMP:11777"/>
        <dbReference type="Rhea" id="RHEA-COMP:11778"/>
        <dbReference type="ChEBI" id="CHEBI:15377"/>
        <dbReference type="ChEBI" id="CHEBI:15378"/>
        <dbReference type="ChEBI" id="CHEBI:16301"/>
        <dbReference type="ChEBI" id="CHEBI:17632"/>
        <dbReference type="ChEBI" id="CHEBI:29033"/>
        <dbReference type="ChEBI" id="CHEBI:29034"/>
        <dbReference type="EC" id="1.9.6.1"/>
    </reaction>
</comment>
<comment type="cofactor">
    <cofactor evidence="1">
        <name>[4Fe-4S] cluster</name>
        <dbReference type="ChEBI" id="CHEBI:49883"/>
    </cofactor>
    <text evidence="1">Binds 1 [4Fe-4S] cluster.</text>
</comment>
<comment type="cofactor">
    <cofactor evidence="1">
        <name>Mo-bis(molybdopterin guanine dinucleotide)</name>
        <dbReference type="ChEBI" id="CHEBI:60539"/>
    </cofactor>
    <text evidence="1">Binds 1 molybdenum-bis(molybdopterin guanine dinucleotide) (Mo-bis-MGD) cofactor per subunit.</text>
</comment>
<comment type="subunit">
    <text evidence="1">Component of the periplasmic nitrate reductase NapAB complex composed of NapA and NapB.</text>
</comment>
<comment type="subcellular location">
    <subcellularLocation>
        <location evidence="1">Periplasm</location>
    </subcellularLocation>
</comment>
<comment type="PTM">
    <text evidence="1">Predicted to be exported by the Tat system. The position of the signal peptide cleavage has not been experimentally proven.</text>
</comment>
<comment type="similarity">
    <text evidence="1">Belongs to the prokaryotic molybdopterin-containing oxidoreductase family. NasA/NapA/NarB subfamily.</text>
</comment>
<name>NAPA_VIBCM</name>
<proteinExistence type="inferred from homology"/>
<evidence type="ECO:0000255" key="1">
    <source>
        <dbReference type="HAMAP-Rule" id="MF_01630"/>
    </source>
</evidence>
<keyword id="KW-0004">4Fe-4S</keyword>
<keyword id="KW-0249">Electron transport</keyword>
<keyword id="KW-0408">Iron</keyword>
<keyword id="KW-0411">Iron-sulfur</keyword>
<keyword id="KW-0479">Metal-binding</keyword>
<keyword id="KW-0500">Molybdenum</keyword>
<keyword id="KW-0534">Nitrate assimilation</keyword>
<keyword id="KW-0560">Oxidoreductase</keyword>
<keyword id="KW-0574">Periplasm</keyword>
<keyword id="KW-0732">Signal</keyword>
<keyword id="KW-0813">Transport</keyword>